<name>SEPT7_MOUSE</name>
<reference key="1">
    <citation type="journal article" date="1998" name="Biochim. Biophys. Acta">
        <title>Sequence of murine CDC10 cDNA, gene organization and expression analysis.</title>
        <authorList>
            <person name="Soulier S."/>
            <person name="Vilotte J.-L."/>
        </authorList>
    </citation>
    <scope>NUCLEOTIDE SEQUENCE [GENOMIC DNA / MRNA]</scope>
    <source>
        <strain>BALB/cJ</strain>
    </source>
</reference>
<reference key="2">
    <citation type="journal article" date="2004" name="Genome Res.">
        <title>The status, quality, and expansion of the NIH full-length cDNA project: the Mammalian Gene Collection (MGC).</title>
        <authorList>
            <consortium name="The MGC Project Team"/>
        </authorList>
    </citation>
    <scope>NUCLEOTIDE SEQUENCE [LARGE SCALE MRNA]</scope>
    <source>
        <strain>FVB/N</strain>
        <tissue>Colon</tissue>
    </source>
</reference>
<reference key="3">
    <citation type="submission" date="2009-01" db="UniProtKB">
        <authorList>
            <person name="Lubec G."/>
            <person name="Kang S.U."/>
            <person name="Sunyer B."/>
            <person name="Chen W.-Q."/>
        </authorList>
    </citation>
    <scope>PROTEIN SEQUENCE OF 25-41; 63-95; 137-146; 186-207; 221-234; 298-309; 333-342 AND 416-424</scope>
    <scope>IDENTIFICATION BY MASS SPECTROMETRY</scope>
    <source>
        <strain>C57BL/6J</strain>
        <strain>OF1</strain>
        <tissue>Brain</tissue>
        <tissue>Hippocampus</tissue>
    </source>
</reference>
<reference key="4">
    <citation type="journal article" date="2002" name="Mol. Cell. Biol.">
        <title>The septin CDCrel-1 is dispensable for normal development and neurotransmitter release.</title>
        <authorList>
            <person name="Peng X.-R."/>
            <person name="Jia Z."/>
            <person name="Zhang Y."/>
            <person name="Ware J."/>
            <person name="Trimble W.S."/>
        </authorList>
    </citation>
    <scope>INTERACTION WITH SEPTIN2 AND SEPTIN5</scope>
</reference>
<reference key="5">
    <citation type="journal article" date="2005" name="Nat. Biotechnol.">
        <title>Immunoaffinity profiling of tyrosine phosphorylation in cancer cells.</title>
        <authorList>
            <person name="Rush J."/>
            <person name="Moritz A."/>
            <person name="Lee K.A."/>
            <person name="Guo A."/>
            <person name="Goss V.L."/>
            <person name="Spek E.J."/>
            <person name="Zhang H."/>
            <person name="Zha X.-M."/>
            <person name="Polakiewicz R.D."/>
            <person name="Comb M.J."/>
        </authorList>
    </citation>
    <scope>IDENTIFICATION BY MASS SPECTROMETRY [LARGE SCALE ANALYSIS]</scope>
</reference>
<reference key="6">
    <citation type="journal article" date="2007" name="Hum. Mutat.">
        <title>SEPT9 sequence alternations causing hereditary neuralgic amyotrophy are associated with altered interactions with SEPT4/SEPT11 and resistance to Rho/Rhotekin-signaling.</title>
        <authorList>
            <person name="Sudo K."/>
            <person name="Ito H."/>
            <person name="Iwamoto I."/>
            <person name="Morishita R."/>
            <person name="Asano T."/>
            <person name="Nagata K."/>
        </authorList>
    </citation>
    <scope>SUBCELLULAR LOCATION</scope>
</reference>
<reference key="7">
    <citation type="journal article" date="2007" name="Mol. Cell. Proteomics">
        <title>Qualitative and quantitative analyses of protein phosphorylation in naive and stimulated mouse synaptosomal preparations.</title>
        <authorList>
            <person name="Munton R.P."/>
            <person name="Tweedie-Cullen R."/>
            <person name="Livingstone-Zatchej M."/>
            <person name="Weinandy F."/>
            <person name="Waidelich M."/>
            <person name="Longo D."/>
            <person name="Gehrig P."/>
            <person name="Potthast F."/>
            <person name="Rutishauser D."/>
            <person name="Gerrits B."/>
            <person name="Panse C."/>
            <person name="Schlapbach R."/>
            <person name="Mansuy I.M."/>
        </authorList>
    </citation>
    <scope>IDENTIFICATION BY MASS SPECTROMETRY [LARGE SCALE ANALYSIS]</scope>
    <source>
        <tissue>Brain cortex</tissue>
    </source>
</reference>
<reference key="8">
    <citation type="journal article" date="2008" name="J. Proteome Res.">
        <title>Large-scale identification and evolution indexing of tyrosine phosphorylation sites from murine brain.</title>
        <authorList>
            <person name="Ballif B.A."/>
            <person name="Carey G.R."/>
            <person name="Sunyaev S.R."/>
            <person name="Gygi S.P."/>
        </authorList>
    </citation>
    <scope>PHOSPHORYLATION [LARGE SCALE ANALYSIS] AT TYR-29</scope>
    <scope>IDENTIFICATION BY MASS SPECTROMETRY [LARGE SCALE ANALYSIS]</scope>
    <source>
        <tissue>Brain</tissue>
    </source>
</reference>
<reference key="9">
    <citation type="journal article" date="2010" name="Cell">
        <title>A tissue-specific atlas of mouse protein phosphorylation and expression.</title>
        <authorList>
            <person name="Huttlin E.L."/>
            <person name="Jedrychowski M.P."/>
            <person name="Elias J.E."/>
            <person name="Goswami T."/>
            <person name="Rad R."/>
            <person name="Beausoleil S.A."/>
            <person name="Villen J."/>
            <person name="Haas W."/>
            <person name="Sowa M.E."/>
            <person name="Gygi S.P."/>
        </authorList>
    </citation>
    <scope>PHOSPHORYLATION [LARGE SCALE ANALYSIS] AT SER-76; THR-227; SER-333 AND THR-425</scope>
    <scope>IDENTIFICATION BY MASS SPECTROMETRY [LARGE SCALE ANALYSIS]</scope>
    <source>
        <tissue>Brain</tissue>
        <tissue>Brown adipose tissue</tissue>
        <tissue>Heart</tissue>
        <tissue>Kidney</tissue>
        <tissue>Liver</tissue>
        <tissue>Lung</tissue>
        <tissue>Pancreas</tissue>
        <tissue>Spleen</tissue>
        <tissue>Testis</tissue>
    </source>
</reference>
<reference key="10">
    <citation type="journal article" date="2010" name="Mol. Biol. Cell">
        <title>Septin 14 is involved in cortical neuronal migration via interaction with Septin 4.</title>
        <authorList>
            <person name="Shinoda T."/>
            <person name="Ito H."/>
            <person name="Sudo K."/>
            <person name="Iwamoto I."/>
            <person name="Morishita R."/>
            <person name="Nagata K."/>
        </authorList>
    </citation>
    <scope>TISSUE SPECIFICITY</scope>
</reference>
<reference key="11">
    <citation type="journal article" date="2013" name="Mol. Cell">
        <title>SIRT5-mediated lysine desuccinylation impacts diverse metabolic pathways.</title>
        <authorList>
            <person name="Park J."/>
            <person name="Chen Y."/>
            <person name="Tishkoff D.X."/>
            <person name="Peng C."/>
            <person name="Tan M."/>
            <person name="Dai L."/>
            <person name="Xie Z."/>
            <person name="Zhang Y."/>
            <person name="Zwaans B.M."/>
            <person name="Skinner M.E."/>
            <person name="Lombard D.B."/>
            <person name="Zhao Y."/>
        </authorList>
    </citation>
    <scope>ACETYLATION [LARGE SCALE ANALYSIS] AT LYS-372</scope>
    <scope>IDENTIFICATION BY MASS SPECTROMETRY [LARGE SCALE ANALYSIS]</scope>
    <source>
        <tissue>Embryonic fibroblast</tissue>
    </source>
</reference>
<gene>
    <name evidence="10" type="primary">Septin7</name>
    <name evidence="9" type="synonym">Cdc10</name>
    <name evidence="10" type="synonym">Sept7</name>
</gene>
<sequence>MSVSARSAAAEERSVNCGTMAQPKNLEGYVGFANLPNQVYRKSVKRGFEFTLMVVGESGLGKSTLINSLFLTDLYSPEYPGPSHRIKKTVQVEQSKVLIKEGGVQLLLTIVDTPGFGDAVDNSNCWQPVIDYIDSKFEDYLNAESRVNRRQMPDNRVQCCLYFIAPSGHGLKPLDIEFMKRLHEKVNIIPLIAKADTLTPEECQQFKKQIMKEIQEHKIKIYEFPETDDEEENKLVKKIKDRLPLAVVGSNTIIEVNGKRVRGRQYPWGVAEVENGEHCDFTILRNMLIRTHMQDLKDVTNNVHYENYRSRKLAAVTYNGVDNNKNKGQLTKSPLAQMEEERREHVAKMKKMEMEMEQVFEMKVKEKVQKLKDSEAELQRRHEQMKKNLEAQHKELEEKRRQFEEEKANWEAQQRILEQQNSSRTLEKNKKKGKIF</sequence>
<accession>O55131</accession>
<proteinExistence type="evidence at protein level"/>
<organism>
    <name type="scientific">Mus musculus</name>
    <name type="common">Mouse</name>
    <dbReference type="NCBI Taxonomy" id="10090"/>
    <lineage>
        <taxon>Eukaryota</taxon>
        <taxon>Metazoa</taxon>
        <taxon>Chordata</taxon>
        <taxon>Craniata</taxon>
        <taxon>Vertebrata</taxon>
        <taxon>Euteleostomi</taxon>
        <taxon>Mammalia</taxon>
        <taxon>Eutheria</taxon>
        <taxon>Euarchontoglires</taxon>
        <taxon>Glires</taxon>
        <taxon>Rodentia</taxon>
        <taxon>Myomorpha</taxon>
        <taxon>Muroidea</taxon>
        <taxon>Muridae</taxon>
        <taxon>Murinae</taxon>
        <taxon>Mus</taxon>
        <taxon>Mus</taxon>
    </lineage>
</organism>
<evidence type="ECO:0000250" key="1"/>
<evidence type="ECO:0000250" key="2">
    <source>
        <dbReference type="UniProtKB" id="Q16181"/>
    </source>
</evidence>
<evidence type="ECO:0000255" key="3"/>
<evidence type="ECO:0000255" key="4">
    <source>
        <dbReference type="PROSITE-ProRule" id="PRU01056"/>
    </source>
</evidence>
<evidence type="ECO:0000256" key="5">
    <source>
        <dbReference type="SAM" id="MobiDB-lite"/>
    </source>
</evidence>
<evidence type="ECO:0000269" key="6">
    <source>
    </source>
</evidence>
<evidence type="ECO:0000269" key="7">
    <source>
    </source>
</evidence>
<evidence type="ECO:0000269" key="8">
    <source>
    </source>
</evidence>
<evidence type="ECO:0000303" key="9">
    <source>
    </source>
</evidence>
<evidence type="ECO:0000312" key="10">
    <source>
        <dbReference type="MGI" id="MGI:1335094"/>
    </source>
</evidence>
<evidence type="ECO:0007744" key="11">
    <source>
    </source>
</evidence>
<evidence type="ECO:0007744" key="12">
    <source>
    </source>
</evidence>
<evidence type="ECO:0007744" key="13">
    <source>
    </source>
</evidence>
<dbReference type="EMBL" id="AJ223782">
    <property type="protein sequence ID" value="CAA11547.1"/>
    <property type="molecule type" value="Genomic_DNA"/>
</dbReference>
<dbReference type="EMBL" id="AJ223783">
    <property type="protein sequence ID" value="CAA11547.1"/>
    <property type="status" value="JOINED"/>
    <property type="molecule type" value="Genomic_DNA"/>
</dbReference>
<dbReference type="EMBL" id="AJ223784">
    <property type="protein sequence ID" value="CAA11547.1"/>
    <property type="status" value="JOINED"/>
    <property type="molecule type" value="Genomic_DNA"/>
</dbReference>
<dbReference type="EMBL" id="AJ223785">
    <property type="protein sequence ID" value="CAA11547.1"/>
    <property type="status" value="JOINED"/>
    <property type="molecule type" value="Genomic_DNA"/>
</dbReference>
<dbReference type="EMBL" id="AJ223786">
    <property type="protein sequence ID" value="CAA11547.1"/>
    <property type="status" value="JOINED"/>
    <property type="molecule type" value="Genomic_DNA"/>
</dbReference>
<dbReference type="EMBL" id="AJ223787">
    <property type="protein sequence ID" value="CAA11547.1"/>
    <property type="status" value="JOINED"/>
    <property type="molecule type" value="Genomic_DNA"/>
</dbReference>
<dbReference type="EMBL" id="AJ223788">
    <property type="protein sequence ID" value="CAA11547.1"/>
    <property type="status" value="JOINED"/>
    <property type="molecule type" value="Genomic_DNA"/>
</dbReference>
<dbReference type="EMBL" id="AJ223789">
    <property type="protein sequence ID" value="CAA11547.1"/>
    <property type="status" value="JOINED"/>
    <property type="molecule type" value="Genomic_DNA"/>
</dbReference>
<dbReference type="EMBL" id="AJ223790">
    <property type="protein sequence ID" value="CAA11547.1"/>
    <property type="status" value="JOINED"/>
    <property type="molecule type" value="Genomic_DNA"/>
</dbReference>
<dbReference type="EMBL" id="AJ223791">
    <property type="protein sequence ID" value="CAA11547.1"/>
    <property type="status" value="JOINED"/>
    <property type="molecule type" value="Genomic_DNA"/>
</dbReference>
<dbReference type="EMBL" id="AJ223792">
    <property type="protein sequence ID" value="CAA11547.1"/>
    <property type="status" value="JOINED"/>
    <property type="molecule type" value="Genomic_DNA"/>
</dbReference>
<dbReference type="EMBL" id="AJ223793">
    <property type="protein sequence ID" value="CAA11547.1"/>
    <property type="status" value="JOINED"/>
    <property type="molecule type" value="Genomic_DNA"/>
</dbReference>
<dbReference type="EMBL" id="AJ223794">
    <property type="protein sequence ID" value="CAA11547.1"/>
    <property type="status" value="JOINED"/>
    <property type="molecule type" value="Genomic_DNA"/>
</dbReference>
<dbReference type="EMBL" id="BC058587">
    <property type="protein sequence ID" value="AAH58587.1"/>
    <property type="molecule type" value="mRNA"/>
</dbReference>
<dbReference type="RefSeq" id="NP_001192296.1">
    <property type="nucleotide sequence ID" value="NM_001205367.2"/>
</dbReference>
<dbReference type="SMR" id="O55131"/>
<dbReference type="BioGRID" id="231619">
    <property type="interactions" value="40"/>
</dbReference>
<dbReference type="FunCoup" id="O55131">
    <property type="interactions" value="1956"/>
</dbReference>
<dbReference type="IntAct" id="O55131">
    <property type="interactions" value="14"/>
</dbReference>
<dbReference type="MINT" id="O55131"/>
<dbReference type="STRING" id="10090.ENSMUSP00000127641"/>
<dbReference type="GlyGen" id="O55131">
    <property type="glycosylation" value="1 site, 1 O-linked glycan (1 site)"/>
</dbReference>
<dbReference type="iPTMnet" id="O55131"/>
<dbReference type="PhosphoSitePlus" id="O55131"/>
<dbReference type="SwissPalm" id="O55131"/>
<dbReference type="jPOST" id="O55131"/>
<dbReference type="PaxDb" id="10090-ENSMUSP00000110927"/>
<dbReference type="PeptideAtlas" id="O55131"/>
<dbReference type="ProteomicsDB" id="261159"/>
<dbReference type="Pumba" id="O55131"/>
<dbReference type="DNASU" id="235072"/>
<dbReference type="GeneID" id="235072"/>
<dbReference type="KEGG" id="mmu:235072"/>
<dbReference type="AGR" id="MGI:1335094"/>
<dbReference type="CTD" id="989"/>
<dbReference type="MGI" id="MGI:1335094">
    <property type="gene designation" value="Septin7"/>
</dbReference>
<dbReference type="eggNOG" id="KOG2655">
    <property type="taxonomic scope" value="Eukaryota"/>
</dbReference>
<dbReference type="InParanoid" id="O55131"/>
<dbReference type="PhylomeDB" id="O55131"/>
<dbReference type="Reactome" id="R-MMU-5687128">
    <property type="pathway name" value="MAPK6/MAPK4 signaling"/>
</dbReference>
<dbReference type="BioGRID-ORCS" id="235072">
    <property type="hits" value="10 hits in 50 CRISPR screens"/>
</dbReference>
<dbReference type="CD-CODE" id="CE726F99">
    <property type="entry name" value="Postsynaptic density"/>
</dbReference>
<dbReference type="ChiTaRS" id="Sept7">
    <property type="organism name" value="mouse"/>
</dbReference>
<dbReference type="PRO" id="PR:O55131"/>
<dbReference type="Proteomes" id="UP000000589">
    <property type="component" value="Unplaced"/>
</dbReference>
<dbReference type="RNAct" id="O55131">
    <property type="molecule type" value="protein"/>
</dbReference>
<dbReference type="GO" id="GO:0043679">
    <property type="term" value="C:axon terminus"/>
    <property type="evidence" value="ECO:0000314"/>
    <property type="project" value="MGI"/>
</dbReference>
<dbReference type="GO" id="GO:0005930">
    <property type="term" value="C:axoneme"/>
    <property type="evidence" value="ECO:0000250"/>
    <property type="project" value="UniProtKB"/>
</dbReference>
<dbReference type="GO" id="GO:0005938">
    <property type="term" value="C:cell cortex"/>
    <property type="evidence" value="ECO:0000314"/>
    <property type="project" value="MGI"/>
</dbReference>
<dbReference type="GO" id="GO:0032154">
    <property type="term" value="C:cleavage furrow"/>
    <property type="evidence" value="ECO:0007669"/>
    <property type="project" value="UniProtKB-SubCell"/>
</dbReference>
<dbReference type="GO" id="GO:0005737">
    <property type="term" value="C:cytoplasm"/>
    <property type="evidence" value="ECO:0000314"/>
    <property type="project" value="MGI"/>
</dbReference>
<dbReference type="GO" id="GO:0000776">
    <property type="term" value="C:kinetochore"/>
    <property type="evidence" value="ECO:0007669"/>
    <property type="project" value="UniProtKB-KW"/>
</dbReference>
<dbReference type="GO" id="GO:0016020">
    <property type="term" value="C:membrane"/>
    <property type="evidence" value="ECO:0000314"/>
    <property type="project" value="MGI"/>
</dbReference>
<dbReference type="GO" id="GO:0030496">
    <property type="term" value="C:midbody"/>
    <property type="evidence" value="ECO:0007669"/>
    <property type="project" value="UniProtKB-SubCell"/>
</dbReference>
<dbReference type="GO" id="GO:0031514">
    <property type="term" value="C:motile cilium"/>
    <property type="evidence" value="ECO:0007669"/>
    <property type="project" value="UniProtKB-SubCell"/>
</dbReference>
<dbReference type="GO" id="GO:0043209">
    <property type="term" value="C:myelin sheath"/>
    <property type="evidence" value="ECO:0007005"/>
    <property type="project" value="UniProtKB"/>
</dbReference>
<dbReference type="GO" id="GO:0043005">
    <property type="term" value="C:neuron projection"/>
    <property type="evidence" value="ECO:0000314"/>
    <property type="project" value="MGI"/>
</dbReference>
<dbReference type="GO" id="GO:0043025">
    <property type="term" value="C:neuronal cell body"/>
    <property type="evidence" value="ECO:0000314"/>
    <property type="project" value="MGI"/>
</dbReference>
<dbReference type="GO" id="GO:0005886">
    <property type="term" value="C:plasma membrane"/>
    <property type="evidence" value="ECO:0000314"/>
    <property type="project" value="MGI"/>
</dbReference>
<dbReference type="GO" id="GO:0042734">
    <property type="term" value="C:presynaptic membrane"/>
    <property type="evidence" value="ECO:0000314"/>
    <property type="project" value="SynGO"/>
</dbReference>
<dbReference type="GO" id="GO:0032991">
    <property type="term" value="C:protein-containing complex"/>
    <property type="evidence" value="ECO:0000314"/>
    <property type="project" value="MGI"/>
</dbReference>
<dbReference type="GO" id="GO:0031105">
    <property type="term" value="C:septin complex"/>
    <property type="evidence" value="ECO:0000314"/>
    <property type="project" value="UniProtKB"/>
</dbReference>
<dbReference type="GO" id="GO:0032156">
    <property type="term" value="C:septin cytoskeleton"/>
    <property type="evidence" value="ECO:0000314"/>
    <property type="project" value="MGI"/>
</dbReference>
<dbReference type="GO" id="GO:0032160">
    <property type="term" value="C:septin filament array"/>
    <property type="evidence" value="ECO:0000314"/>
    <property type="project" value="MGI"/>
</dbReference>
<dbReference type="GO" id="GO:0005940">
    <property type="term" value="C:septin ring"/>
    <property type="evidence" value="ECO:0000314"/>
    <property type="project" value="MGI"/>
</dbReference>
<dbReference type="GO" id="GO:0005819">
    <property type="term" value="C:spindle"/>
    <property type="evidence" value="ECO:0007669"/>
    <property type="project" value="UniProtKB-SubCell"/>
</dbReference>
<dbReference type="GO" id="GO:0045202">
    <property type="term" value="C:synapse"/>
    <property type="evidence" value="ECO:0000314"/>
    <property type="project" value="MGI"/>
</dbReference>
<dbReference type="GO" id="GO:0031982">
    <property type="term" value="C:vesicle"/>
    <property type="evidence" value="ECO:0000314"/>
    <property type="project" value="MGI"/>
</dbReference>
<dbReference type="GO" id="GO:0005525">
    <property type="term" value="F:GTP binding"/>
    <property type="evidence" value="ECO:0007669"/>
    <property type="project" value="UniProtKB-KW"/>
</dbReference>
<dbReference type="GO" id="GO:0060271">
    <property type="term" value="P:cilium assembly"/>
    <property type="evidence" value="ECO:0000250"/>
    <property type="project" value="UniProtKB"/>
</dbReference>
<dbReference type="GO" id="GO:0048668">
    <property type="term" value="P:collateral sprouting"/>
    <property type="evidence" value="ECO:0000315"/>
    <property type="project" value="MGI"/>
</dbReference>
<dbReference type="GO" id="GO:0030865">
    <property type="term" value="P:cortical cytoskeleton organization"/>
    <property type="evidence" value="ECO:0000315"/>
    <property type="project" value="MGI"/>
</dbReference>
<dbReference type="GO" id="GO:0046323">
    <property type="term" value="P:D-glucose import"/>
    <property type="evidence" value="ECO:0000315"/>
    <property type="project" value="MGI"/>
</dbReference>
<dbReference type="GO" id="GO:0060997">
    <property type="term" value="P:dendritic spine morphogenesis"/>
    <property type="evidence" value="ECO:0000315"/>
    <property type="project" value="MGI"/>
</dbReference>
<dbReference type="GO" id="GO:0000281">
    <property type="term" value="P:mitotic cytokinesis"/>
    <property type="evidence" value="ECO:0000315"/>
    <property type="project" value="MGI"/>
</dbReference>
<dbReference type="GO" id="GO:0031270">
    <property type="term" value="P:pseudopodium retraction"/>
    <property type="evidence" value="ECO:0000315"/>
    <property type="project" value="MGI"/>
</dbReference>
<dbReference type="GO" id="GO:0016476">
    <property type="term" value="P:regulation of embryonic cell shape"/>
    <property type="evidence" value="ECO:0000250"/>
    <property type="project" value="UniProtKB"/>
</dbReference>
<dbReference type="GO" id="GO:0007283">
    <property type="term" value="P:spermatogenesis"/>
    <property type="evidence" value="ECO:0007669"/>
    <property type="project" value="UniProtKB-KW"/>
</dbReference>
<dbReference type="GO" id="GO:0016192">
    <property type="term" value="P:vesicle-mediated transport"/>
    <property type="evidence" value="ECO:0000315"/>
    <property type="project" value="MGI"/>
</dbReference>
<dbReference type="CDD" id="cd01850">
    <property type="entry name" value="CDC_Septin"/>
    <property type="match status" value="1"/>
</dbReference>
<dbReference type="FunFam" id="3.40.50.300:FF:000162">
    <property type="entry name" value="septin-7 isoform X1"/>
    <property type="match status" value="1"/>
</dbReference>
<dbReference type="Gene3D" id="3.40.50.300">
    <property type="entry name" value="P-loop containing nucleotide triphosphate hydrolases"/>
    <property type="match status" value="1"/>
</dbReference>
<dbReference type="InterPro" id="IPR030379">
    <property type="entry name" value="G_SEPTIN_dom"/>
</dbReference>
<dbReference type="InterPro" id="IPR027417">
    <property type="entry name" value="P-loop_NTPase"/>
</dbReference>
<dbReference type="InterPro" id="IPR016491">
    <property type="entry name" value="Septin"/>
</dbReference>
<dbReference type="InterPro" id="IPR008115">
    <property type="entry name" value="Septin7"/>
</dbReference>
<dbReference type="PANTHER" id="PTHR18884">
    <property type="entry name" value="SEPTIN"/>
    <property type="match status" value="1"/>
</dbReference>
<dbReference type="Pfam" id="PF00735">
    <property type="entry name" value="Septin"/>
    <property type="match status" value="1"/>
</dbReference>
<dbReference type="PIRSF" id="PIRSF006698">
    <property type="entry name" value="Septin"/>
    <property type="match status" value="1"/>
</dbReference>
<dbReference type="PRINTS" id="PR01742">
    <property type="entry name" value="SEPTIN7"/>
</dbReference>
<dbReference type="SUPFAM" id="SSF52540">
    <property type="entry name" value="P-loop containing nucleoside triphosphate hydrolases"/>
    <property type="match status" value="1"/>
</dbReference>
<dbReference type="PROSITE" id="PS51719">
    <property type="entry name" value="G_SEPTIN"/>
    <property type="match status" value="1"/>
</dbReference>
<keyword id="KW-0007">Acetylation</keyword>
<keyword id="KW-0131">Cell cycle</keyword>
<keyword id="KW-0132">Cell division</keyword>
<keyword id="KW-0966">Cell projection</keyword>
<keyword id="KW-0137">Centromere</keyword>
<keyword id="KW-0158">Chromosome</keyword>
<keyword id="KW-0969">Cilium</keyword>
<keyword id="KW-0175">Coiled coil</keyword>
<keyword id="KW-0963">Cytoplasm</keyword>
<keyword id="KW-0206">Cytoskeleton</keyword>
<keyword id="KW-0221">Differentiation</keyword>
<keyword id="KW-0903">Direct protein sequencing</keyword>
<keyword id="KW-0282">Flagellum</keyword>
<keyword id="KW-0342">GTP-binding</keyword>
<keyword id="KW-0995">Kinetochore</keyword>
<keyword id="KW-0498">Mitosis</keyword>
<keyword id="KW-0547">Nucleotide-binding</keyword>
<keyword id="KW-0597">Phosphoprotein</keyword>
<keyword id="KW-1185">Reference proteome</keyword>
<keyword id="KW-0744">Spermatogenesis</keyword>
<feature type="initiator methionine" description="Removed" evidence="2">
    <location>
        <position position="1"/>
    </location>
</feature>
<feature type="chain" id="PRO_0000173529" description="Septin-7">
    <location>
        <begin position="2"/>
        <end position="436"/>
    </location>
</feature>
<feature type="domain" description="Septin-type G" evidence="4">
    <location>
        <begin position="46"/>
        <end position="315"/>
    </location>
</feature>
<feature type="region of interest" description="Interaction with SEPTIN12" evidence="2">
    <location>
        <begin position="46"/>
        <end position="316"/>
    </location>
</feature>
<feature type="region of interest" description="G1 motif" evidence="4">
    <location>
        <begin position="56"/>
        <end position="63"/>
    </location>
</feature>
<feature type="region of interest" description="G3 motif" evidence="4">
    <location>
        <begin position="112"/>
        <end position="115"/>
    </location>
</feature>
<feature type="region of interest" description="G4 motif" evidence="4">
    <location>
        <begin position="193"/>
        <end position="196"/>
    </location>
</feature>
<feature type="region of interest" description="Disordered" evidence="5">
    <location>
        <begin position="377"/>
        <end position="436"/>
    </location>
</feature>
<feature type="coiled-coil region" evidence="3">
    <location>
        <begin position="331"/>
        <end position="436"/>
    </location>
</feature>
<feature type="compositionally biased region" description="Basic and acidic residues" evidence="5">
    <location>
        <begin position="377"/>
        <end position="409"/>
    </location>
</feature>
<feature type="binding site" evidence="1">
    <location>
        <begin position="56"/>
        <end position="63"/>
    </location>
    <ligand>
        <name>GTP</name>
        <dbReference type="ChEBI" id="CHEBI:37565"/>
    </ligand>
</feature>
<feature type="binding site" evidence="1">
    <location>
        <position position="89"/>
    </location>
    <ligand>
        <name>GTP</name>
        <dbReference type="ChEBI" id="CHEBI:37565"/>
    </ligand>
</feature>
<feature type="binding site" evidence="1">
    <location>
        <position position="115"/>
    </location>
    <ligand>
        <name>GTP</name>
        <dbReference type="ChEBI" id="CHEBI:37565"/>
    </ligand>
</feature>
<feature type="binding site" evidence="1">
    <location>
        <begin position="194"/>
        <end position="202"/>
    </location>
    <ligand>
        <name>GTP</name>
        <dbReference type="ChEBI" id="CHEBI:37565"/>
    </ligand>
</feature>
<feature type="binding site" evidence="1">
    <location>
        <position position="249"/>
    </location>
    <ligand>
        <name>GTP</name>
        <dbReference type="ChEBI" id="CHEBI:37565"/>
    </ligand>
</feature>
<feature type="binding site" evidence="1">
    <location>
        <position position="264"/>
    </location>
    <ligand>
        <name>GTP</name>
        <dbReference type="ChEBI" id="CHEBI:37565"/>
    </ligand>
</feature>
<feature type="modified residue" description="N-acetylserine" evidence="2">
    <location>
        <position position="2"/>
    </location>
</feature>
<feature type="modified residue" description="Phosphotyrosine" evidence="11">
    <location>
        <position position="29"/>
    </location>
</feature>
<feature type="modified residue" description="Phosphoserine" evidence="12">
    <location>
        <position position="76"/>
    </location>
</feature>
<feature type="modified residue" description="Phosphothreonine" evidence="12">
    <location>
        <position position="227"/>
    </location>
</feature>
<feature type="modified residue" description="Phosphoserine" evidence="12">
    <location>
        <position position="333"/>
    </location>
</feature>
<feature type="modified residue" description="N6-acetyllysine" evidence="13">
    <location>
        <position position="372"/>
    </location>
</feature>
<feature type="modified residue" description="Phosphoserine" evidence="2">
    <location>
        <position position="423"/>
    </location>
</feature>
<feature type="modified residue" description="Phosphothreonine" evidence="12">
    <location>
        <position position="425"/>
    </location>
</feature>
<comment type="function">
    <text evidence="1 2">Filament-forming cytoskeletal GTPase. Required for normal organization of the actin cytoskeleton. Required for normal progress through mitosis. Involved in cytokinesis. Required for normal association of CENPE with the kinetochore. Plays a role in ciliogenesis and collective cell movements. Forms a filamentous structure with SEPTIN12, SEPTIN6, SEPTIN2 and probably SEPTIN4 at the sperm annulus which is required for the structural integrity and motility of the sperm tail during postmeiotic differentiation (By similarity).</text>
</comment>
<comment type="subunit">
    <text evidence="1 2 6">Septins polymerize into heterooligomeric protein complexes that form filaments, and associate with cellular membranes, actin filaments and microtubules. GTPase activity is required for filament formation. Filaments are assembled from asymmetrical heterotrimers, composed of SEPTIN2, SEPTIN6 and SEPTIN7 that associate head-to-head to form a hexameric unit. Within the trimer, directly interacts with SEPTIN6, while interaction with SEPTIN2 seems indirect. In the absence of SEPTIN6, forms homodimers. Interacts directly with CENPE and links CENPE to septin filaments composed of SEPTIN2, SEPTIN6 and SEPTIN7. Interacts with SEPTIN8, SEPTIN9 and SEPTIN11. Component of a septin core octameric complex consisting of SEPTIN12, SEPTIN7, SEPTIN6 and SEPTIN2 or SEPTIN4 in the order 12-7-6-2-2-6-7-12 or 12-7-6-4-4-6-7-12 and located in the sperm annulus; the SEPTIN12:SEPTIN7 association is mediated by the respective GTP-binding domains (By similarity). Interacts with SEPTIN2 and SEPTIN5 (PubMed:11739749).</text>
</comment>
<comment type="interaction">
    <interactant intactId="EBI-772161">
        <id>O55131</id>
    </interactant>
    <interactant intactId="EBI-1009256">
        <id>Q9Z2V5</id>
        <label>Hdac6</label>
    </interactant>
    <organismsDiffer>false</organismsDiffer>
    <experiments>3</experiments>
</comment>
<comment type="subcellular location">
    <subcellularLocation>
        <location evidence="7">Cytoplasm</location>
    </subcellularLocation>
    <subcellularLocation>
        <location evidence="1">Chromosome</location>
        <location evidence="1">Centromere</location>
        <location evidence="1">Kinetochore</location>
    </subcellularLocation>
    <subcellularLocation>
        <location evidence="1">Cytoplasm</location>
        <location evidence="1">Cytoskeleton</location>
        <location evidence="1">Spindle</location>
    </subcellularLocation>
    <subcellularLocation>
        <location evidence="1">Cleavage furrow</location>
    </subcellularLocation>
    <subcellularLocation>
        <location evidence="1">Midbody</location>
    </subcellularLocation>
    <subcellularLocation>
        <location evidence="1">Cytoplasm</location>
        <location evidence="1">Cytoskeleton</location>
        <location evidence="1">Cilium axoneme</location>
    </subcellularLocation>
    <subcellularLocation>
        <location evidence="2">Cell projection</location>
        <location evidence="2">Cilium</location>
        <location evidence="2">Flagellum</location>
    </subcellularLocation>
    <text evidence="1 2">Distributed throughout the cytoplasm in prometaphase cells. Associated with the spindle during metaphase. Associated with the central spindle and at the cleavage furrow in anaphase cells. Detected at the midbody in telophase (By similarity). Associated with actin stress fibers. Found in the sperm annulus (By similarity).</text>
</comment>
<comment type="tissue specificity">
    <text evidence="8">Expressed in the cerebral cortex (at protein level).</text>
</comment>
<comment type="miscellaneous">
    <text evidence="1">Coordinated expression with SEPTIN2 and SEPTIN6.</text>
</comment>
<comment type="similarity">
    <text evidence="4">Belongs to the TRAFAC class TrmE-Era-EngA-EngB-Septin-like GTPase superfamily. Septin GTPase family.</text>
</comment>
<protein>
    <recommendedName>
        <fullName>Septin-7</fullName>
    </recommendedName>
    <alternativeName>
        <fullName>CDC10 protein homolog</fullName>
    </alternativeName>
</protein>